<gene>
    <name type="ORF">MICPUCDRAFT_53157</name>
</gene>
<comment type="subunit">
    <text evidence="1">Homodimer and heterodimers.</text>
</comment>
<comment type="subcellular location">
    <subcellularLocation>
        <location evidence="1">Cell membrane</location>
        <topology evidence="1">Multi-pass membrane protein</topology>
    </subcellularLocation>
</comment>
<comment type="similarity">
    <text evidence="3">Belongs to the Casparian strip membrane proteins (CASP) family.</text>
</comment>
<comment type="sequence caution" evidence="3">
    <conflict type="erroneous gene model prediction">
        <sequence resource="EMBL-CDS" id="EEH52411"/>
    </conflict>
</comment>
<accession>C1N652</accession>
<dbReference type="EMBL" id="GG663748">
    <property type="protein sequence ID" value="EEH52411.1"/>
    <property type="status" value="ALT_SEQ"/>
    <property type="molecule type" value="Genomic_DNA"/>
</dbReference>
<dbReference type="RefSeq" id="XP_003063275.1">
    <property type="nucleotide sequence ID" value="XM_003063229.1"/>
</dbReference>
<dbReference type="SMR" id="C1N652"/>
<dbReference type="GeneID" id="9688914"/>
<dbReference type="KEGG" id="mpp:MICPUCDRAFT_53157"/>
<dbReference type="OrthoDB" id="10421187at2759"/>
<dbReference type="Proteomes" id="UP000001876">
    <property type="component" value="Unassembled WGS sequence"/>
</dbReference>
<dbReference type="GO" id="GO:0005886">
    <property type="term" value="C:plasma membrane"/>
    <property type="evidence" value="ECO:0007669"/>
    <property type="project" value="UniProtKB-SubCell"/>
</dbReference>
<dbReference type="InterPro" id="IPR008253">
    <property type="entry name" value="Marvel"/>
</dbReference>
<dbReference type="Pfam" id="PF01284">
    <property type="entry name" value="MARVEL"/>
    <property type="match status" value="1"/>
</dbReference>
<organism>
    <name type="scientific">Micromonas pusilla (strain CCMP1545)</name>
    <name type="common">Picoplanktonic green alga</name>
    <dbReference type="NCBI Taxonomy" id="564608"/>
    <lineage>
        <taxon>Eukaryota</taxon>
        <taxon>Viridiplantae</taxon>
        <taxon>Chlorophyta</taxon>
        <taxon>Mamiellophyceae</taxon>
        <taxon>Mamiellales</taxon>
        <taxon>Mamiellaceae</taxon>
        <taxon>Micromonas</taxon>
    </lineage>
</organism>
<proteinExistence type="inferred from homology"/>
<keyword id="KW-1003">Cell membrane</keyword>
<keyword id="KW-0472">Membrane</keyword>
<keyword id="KW-1185">Reference proteome</keyword>
<keyword id="KW-0812">Transmembrane</keyword>
<keyword id="KW-1133">Transmembrane helix</keyword>
<evidence type="ECO:0000250" key="1"/>
<evidence type="ECO:0000255" key="2"/>
<evidence type="ECO:0000305" key="3"/>
<name>CSPL1_MICPC</name>
<protein>
    <recommendedName>
        <fullName>CASP-like protein 0U1</fullName>
        <shortName>MpCASPL0U1</shortName>
    </recommendedName>
</protein>
<reference key="1">
    <citation type="journal article" date="2009" name="Science">
        <title>Green evolution and dynamic adaptations revealed by genomes of the marine picoeukaryotes Micromonas.</title>
        <authorList>
            <person name="Worden A.Z."/>
            <person name="Lee J.H."/>
            <person name="Mock T."/>
            <person name="Rouze P."/>
            <person name="Simmons M.P."/>
            <person name="Aerts A.L."/>
            <person name="Allen A.E."/>
            <person name="Cuvelier M.L."/>
            <person name="Derelle E."/>
            <person name="Everett M.V."/>
            <person name="Foulon E."/>
            <person name="Grimwood J."/>
            <person name="Gundlach H."/>
            <person name="Henrissat B."/>
            <person name="Napoli C."/>
            <person name="McDonald S.M."/>
            <person name="Parker M.S."/>
            <person name="Rombauts S."/>
            <person name="Salamov A."/>
            <person name="Von Dassow P."/>
            <person name="Badger J.H."/>
            <person name="Coutinho P.M."/>
            <person name="Demir E."/>
            <person name="Dubchak I."/>
            <person name="Gentemann C."/>
            <person name="Eikrem W."/>
            <person name="Gready J.E."/>
            <person name="John U."/>
            <person name="Lanier W."/>
            <person name="Lindquist E.A."/>
            <person name="Lucas S."/>
            <person name="Mayer K.F."/>
            <person name="Moreau H."/>
            <person name="Not F."/>
            <person name="Otillar R."/>
            <person name="Panaud O."/>
            <person name="Pangilinan J."/>
            <person name="Paulsen I."/>
            <person name="Piegu B."/>
            <person name="Poliakov A."/>
            <person name="Robbens S."/>
            <person name="Schmutz J."/>
            <person name="Toulza E."/>
            <person name="Wyss T."/>
            <person name="Zelensky A."/>
            <person name="Zhou K."/>
            <person name="Armbrust E.V."/>
            <person name="Bhattacharya D."/>
            <person name="Goodenough U.W."/>
            <person name="Van de Peer Y."/>
            <person name="Grigoriev I.V."/>
        </authorList>
    </citation>
    <scope>NUCLEOTIDE SEQUENCE [LARGE SCALE GENOMIC DNA]</scope>
    <source>
        <strain>CCMP1545</strain>
    </source>
</reference>
<reference key="2">
    <citation type="journal article" date="2014" name="Plant Physiol.">
        <title>Functional and evolutionary analysis of the CASPARIAN STRIP MEMBRANE DOMAIN PROTEIN family.</title>
        <authorList>
            <person name="Roppolo D."/>
            <person name="Boeckmann B."/>
            <person name="Pfister A."/>
            <person name="Boutet E."/>
            <person name="Rubio M.C."/>
            <person name="Denervaud-Tendon V."/>
            <person name="Vermeer J.E."/>
            <person name="Gheyselinck J."/>
            <person name="Xenarios I."/>
            <person name="Geldner N."/>
        </authorList>
    </citation>
    <scope>GENE FAMILY</scope>
    <scope>NOMENCLATURE</scope>
</reference>
<feature type="chain" id="PRO_0000417783" description="CASP-like protein 0U1">
    <location>
        <begin position="1"/>
        <end position="205"/>
    </location>
</feature>
<feature type="topological domain" description="Cytoplasmic" evidence="2">
    <location>
        <begin position="1"/>
        <end position="66"/>
    </location>
</feature>
<feature type="transmembrane region" description="Helical" evidence="2">
    <location>
        <begin position="67"/>
        <end position="87"/>
    </location>
</feature>
<feature type="topological domain" description="Extracellular" evidence="2">
    <location>
        <begin position="88"/>
        <end position="90"/>
    </location>
</feature>
<feature type="transmembrane region" description="Helical" evidence="2">
    <location>
        <begin position="91"/>
        <end position="111"/>
    </location>
</feature>
<feature type="topological domain" description="Cytoplasmic" evidence="2">
    <location>
        <begin position="112"/>
        <end position="137"/>
    </location>
</feature>
<feature type="transmembrane region" description="Helical" evidence="2">
    <location>
        <begin position="138"/>
        <end position="158"/>
    </location>
</feature>
<feature type="topological domain" description="Extracellular" evidence="2">
    <location>
        <begin position="159"/>
        <end position="167"/>
    </location>
</feature>
<feature type="transmembrane region" description="Helical" evidence="2">
    <location>
        <begin position="168"/>
        <end position="188"/>
    </location>
</feature>
<feature type="topological domain" description="Cytoplasmic" evidence="2">
    <location>
        <begin position="189"/>
        <end position="205"/>
    </location>
</feature>
<feature type="domain" description="MARVEL">
    <location>
        <begin position="10"/>
        <end position="162"/>
    </location>
</feature>
<sequence>MSGGDIDPTAINSPKFRLIAVQCLFALTAFATMAGQNKNLAGPDAMTLEECGPYGCGYHKFAVFQFLVVICVTYWLFTMLWMGMYLIQKVPPAGTEFMIYAVFNVLILIAFSTSWTECNETIVDPTYPVCKRATGAKASIAFAMFTWLALCVSMMFTWKEWRDQNYEGLPIFGDFSSFMPGGGGGGMGGGGGYERPSDVNTQTYA</sequence>